<proteinExistence type="evidence at protein level"/>
<reference key="1">
    <citation type="submission" date="2007-04" db="EMBL/GenBank/DDBJ databases">
        <title>Complete sequence of Shewanella putrefaciens CN-32.</title>
        <authorList>
            <consortium name="US DOE Joint Genome Institute"/>
            <person name="Copeland A."/>
            <person name="Lucas S."/>
            <person name="Lapidus A."/>
            <person name="Barry K."/>
            <person name="Detter J.C."/>
            <person name="Glavina del Rio T."/>
            <person name="Hammon N."/>
            <person name="Israni S."/>
            <person name="Dalin E."/>
            <person name="Tice H."/>
            <person name="Pitluck S."/>
            <person name="Chain P."/>
            <person name="Malfatti S."/>
            <person name="Shin M."/>
            <person name="Vergez L."/>
            <person name="Schmutz J."/>
            <person name="Larimer F."/>
            <person name="Land M."/>
            <person name="Hauser L."/>
            <person name="Kyrpides N."/>
            <person name="Mikhailova N."/>
            <person name="Romine M.F."/>
            <person name="Fredrickson J."/>
            <person name="Tiedje J."/>
            <person name="Richardson P."/>
        </authorList>
    </citation>
    <scope>NUCLEOTIDE SEQUENCE [LARGE SCALE GENOMIC DNA]</scope>
    <source>
        <strain>CN-32 / ATCC BAA-453</strain>
    </source>
</reference>
<reference key="2">
    <citation type="journal article" date="2013" name="Biochimie">
        <title>Discrimination based on Gly and Arg/Ser at position 673 between dipeptidyl-peptidase (DPP) 7 and DPP11, widely distributed DPPs in pathogenic and environmental gram-negative bacteria.</title>
        <authorList>
            <person name="Rouf S.M."/>
            <person name="Ohara-Nemoto Y."/>
            <person name="Hoshino T."/>
            <person name="Fujiwara T."/>
            <person name="Ono T."/>
            <person name="Nemoto T.K."/>
        </authorList>
    </citation>
    <scope>FUNCTION</scope>
    <scope>CATALYTIC ACTIVITY</scope>
    <scope>SUBSTRATE SPECIFICITY</scope>
    <scope>MUTAGENESIS OF SER-684 AND LYS-691</scope>
    <source>
        <strain>ATCC 8071 / JCM 20190</strain>
    </source>
</reference>
<keyword id="KW-0031">Aminopeptidase</keyword>
<keyword id="KW-0378">Hydrolase</keyword>
<keyword id="KW-0645">Protease</keyword>
<keyword id="KW-0720">Serine protease</keyword>
<keyword id="KW-0732">Signal</keyword>
<name>DPP11_SHEPC</name>
<evidence type="ECO:0000250" key="1">
    <source>
        <dbReference type="UniProtKB" id="V5YM14"/>
    </source>
</evidence>
<evidence type="ECO:0000255" key="2"/>
<evidence type="ECO:0000269" key="3">
    <source>
    </source>
</evidence>
<evidence type="ECO:0000303" key="4">
    <source>
    </source>
</evidence>
<evidence type="ECO:0000305" key="5"/>
<evidence type="ECO:0000312" key="6">
    <source>
        <dbReference type="EMBL" id="ABP74487.1"/>
    </source>
</evidence>
<feature type="signal peptide" evidence="2">
    <location>
        <begin position="1"/>
        <end position="18"/>
    </location>
</feature>
<feature type="chain" id="PRO_5002676185" description="Asp/Glu-specific dipeptidyl-peptidase">
    <location>
        <begin position="19"/>
        <end position="732"/>
    </location>
</feature>
<feature type="active site" description="Charge relay system" evidence="1">
    <location>
        <position position="80"/>
    </location>
</feature>
<feature type="active site" description="Charge relay system" evidence="1">
    <location>
        <position position="215"/>
    </location>
</feature>
<feature type="active site" description="Charge relay system" evidence="1">
    <location>
        <position position="666"/>
    </location>
</feature>
<feature type="mutagenesis site" description="Catalytic activity highly decreases and the Asp/Glu preference is inverted, i.e., peptidase activity toward Leu-Glu-MCA becomes smaller than that to Leu-Asp-MCA. Partial restoration of activity for Leu-Asp-MCA; when associated with G-691." evidence="3">
    <original>S</original>
    <variation>R</variation>
    <location>
        <position position="684"/>
    </location>
</feature>
<feature type="mutagenesis site" description="Disrupts the acidic residue specificity, as it more efficiently degrades Ala-Asn- and Leu-Gln-MCA. Partial restoration of activity for Leu-Asp-MCA; when associated with R-684." evidence="3">
    <original>K</original>
    <variation>G</variation>
    <location>
        <position position="691"/>
    </location>
</feature>
<accession>A4Y3F4</accession>
<protein>
    <recommendedName>
        <fullName evidence="4">Asp/Glu-specific dipeptidyl-peptidase</fullName>
        <ecNumber evidence="3">3.4.14.-</ecNumber>
    </recommendedName>
    <alternativeName>
        <fullName evidence="4">Dipeptidyl-peptidase 11</fullName>
        <shortName evidence="4">DPP11</shortName>
    </alternativeName>
</protein>
<gene>
    <name type="primary">dpp11</name>
    <name evidence="6" type="ordered locus">Sputcn32_0757</name>
</gene>
<dbReference type="EC" id="3.4.14.-" evidence="3"/>
<dbReference type="EMBL" id="CP000681">
    <property type="protein sequence ID" value="ABP74487.1"/>
    <property type="molecule type" value="Genomic_DNA"/>
</dbReference>
<dbReference type="SMR" id="A4Y3F4"/>
<dbReference type="STRING" id="319224.Sputcn32_0757"/>
<dbReference type="MEROPS" id="S46.003"/>
<dbReference type="KEGG" id="spc:Sputcn32_0757"/>
<dbReference type="eggNOG" id="COG3591">
    <property type="taxonomic scope" value="Bacteria"/>
</dbReference>
<dbReference type="eggNOG" id="COG4990">
    <property type="taxonomic scope" value="Bacteria"/>
</dbReference>
<dbReference type="HOGENOM" id="CLU_013776_0_0_6"/>
<dbReference type="GO" id="GO:0008239">
    <property type="term" value="F:dipeptidyl-peptidase activity"/>
    <property type="evidence" value="ECO:0000314"/>
    <property type="project" value="UniProtKB"/>
</dbReference>
<dbReference type="GO" id="GO:0070009">
    <property type="term" value="F:serine-type aminopeptidase activity"/>
    <property type="evidence" value="ECO:0007669"/>
    <property type="project" value="InterPro"/>
</dbReference>
<dbReference type="GO" id="GO:0043171">
    <property type="term" value="P:peptide catabolic process"/>
    <property type="evidence" value="ECO:0000314"/>
    <property type="project" value="UniProtKB"/>
</dbReference>
<dbReference type="GO" id="GO:0006508">
    <property type="term" value="P:proteolysis"/>
    <property type="evidence" value="ECO:0007669"/>
    <property type="project" value="UniProtKB-KW"/>
</dbReference>
<dbReference type="FunFam" id="2.40.10.10:FF:000102">
    <property type="entry name" value="Dipeptidyl-peptidase 7"/>
    <property type="match status" value="1"/>
</dbReference>
<dbReference type="Gene3D" id="2.40.10.10">
    <property type="entry name" value="Trypsin-like serine proteases"/>
    <property type="match status" value="1"/>
</dbReference>
<dbReference type="InterPro" id="IPR019500">
    <property type="entry name" value="Pep_S46"/>
</dbReference>
<dbReference type="InterPro" id="IPR009003">
    <property type="entry name" value="Peptidase_S1_PA"/>
</dbReference>
<dbReference type="InterPro" id="IPR043504">
    <property type="entry name" value="Peptidase_S1_PA_chymotrypsin"/>
</dbReference>
<dbReference type="InterPro" id="IPR000126">
    <property type="entry name" value="V8_ser_AS"/>
</dbReference>
<dbReference type="PANTHER" id="PTHR38469">
    <property type="entry name" value="PERIPLASMIC PEPTIDASE SUBFAMILY S1B"/>
    <property type="match status" value="1"/>
</dbReference>
<dbReference type="PANTHER" id="PTHR38469:SF1">
    <property type="entry name" value="PERIPLASMIC PEPTIDASE SUBFAMILY S1B"/>
    <property type="match status" value="1"/>
</dbReference>
<dbReference type="Pfam" id="PF10459">
    <property type="entry name" value="Peptidase_S46"/>
    <property type="match status" value="1"/>
</dbReference>
<dbReference type="SUPFAM" id="SSF50494">
    <property type="entry name" value="Trypsin-like serine proteases"/>
    <property type="match status" value="1"/>
</dbReference>
<dbReference type="PROSITE" id="PS00673">
    <property type="entry name" value="V8_SER"/>
    <property type="match status" value="1"/>
</dbReference>
<comment type="function">
    <text evidence="3">Catalyzes the removal of dipeptides from the N-terminus of oligopeptides. Shows a strict specificity for acidic residues (Asp or Glu) in the P1 position, and has probably a hydrophobic residue preference at the P2 position. Preferentially cleaves the synthetic substrate Leu-Glu-methylcoumaryl-7-amide (Leu-Glu-MCA) as compared to Leu-Asp-MCA.</text>
</comment>
<comment type="similarity">
    <text evidence="5">Belongs to the peptidase S46 family.</text>
</comment>
<sequence>MRIALVATLVLTSGIANADEGQWQPYQMPSIADKLSERGIDIPAEKLADLTSYPMNAVVGLGYCTASFVSPQGLVVTNHHCAYKAIQYNTKQEHNYLEQGFLATSMDKEPSAGPNERLYITEAVTDVTKDVTKELSQDPLTRYEEIQNNSKALIKNCEVDDNYRCNVRSFHNGLEYYLIKQLMIRDVRLVYAPPESVGGYGGDIDNYEYPRHSGDFAFLRAYVGKDGKPAAYAEDNIPYKPKSYLKVNADGVKAGDGVFVAGYPGTTSRYNLTSELKFASDWLYPTQAKRYQLQIDTINAMGQEDADIAIKYAGNMASMANRMKKLNGLLAGFKATDIIGIKQSREDNFLAWLKQNPKLNQNLIAELEVLLAEQQQVFQSNYYFTNAQSSTLLTAANSLYRLAKEKQKSDAEREIGYQERDLAMFSSRLKRIDSSFHVDVDKTLWQQDLRAYLAQPNRIAALDDALDLNNKETNLEAKLDGLYSLTTLTDQAQRLAWMDADTTTFETSTDPFIRLAVALYDTNMAQEKAEKILDGKLSTARPDYMAAVIEYYKANNWPVYPDANGTLRISYGMVDGYQSRDALYKQPFTRLDGIVAKHTGAEPYNAPQKLLDAISEQRFGDHLVKSVYQDPRGWICRLFSCLDKPEEFNSVPVNFLSSVDTTGGNSGSPVFNGKGELVGLNFDSTYEAITKDWFFNPTITRAVHVDIRYILWMMDKVDHADNLIKELDLVRN</sequence>
<organism>
    <name type="scientific">Shewanella putrefaciens (strain CN-32 / ATCC BAA-453)</name>
    <dbReference type="NCBI Taxonomy" id="319224"/>
    <lineage>
        <taxon>Bacteria</taxon>
        <taxon>Pseudomonadati</taxon>
        <taxon>Pseudomonadota</taxon>
        <taxon>Gammaproteobacteria</taxon>
        <taxon>Alteromonadales</taxon>
        <taxon>Shewanellaceae</taxon>
        <taxon>Shewanella</taxon>
    </lineage>
</organism>